<feature type="chain" id="PRO_1000140112" description="3-keto-L-gulonate-6-phosphate decarboxylase UlaD">
    <location>
        <begin position="1"/>
        <end position="216"/>
    </location>
</feature>
<feature type="binding site" evidence="1">
    <location>
        <position position="11"/>
    </location>
    <ligand>
        <name>substrate</name>
    </ligand>
</feature>
<feature type="binding site" evidence="1">
    <location>
        <position position="33"/>
    </location>
    <ligand>
        <name>Mg(2+)</name>
        <dbReference type="ChEBI" id="CHEBI:18420"/>
    </ligand>
</feature>
<feature type="binding site" evidence="1">
    <location>
        <position position="62"/>
    </location>
    <ligand>
        <name>Mg(2+)</name>
        <dbReference type="ChEBI" id="CHEBI:18420"/>
    </ligand>
</feature>
<feature type="binding site" evidence="1">
    <location>
        <position position="192"/>
    </location>
    <ligand>
        <name>substrate</name>
    </ligand>
</feature>
<feature type="site" description="Transition state stabilizer" evidence="1">
    <location>
        <position position="64"/>
    </location>
</feature>
<feature type="site" description="Transition state stabilizer" evidence="1">
    <location>
        <position position="67"/>
    </location>
</feature>
<accession>B7M8V6</accession>
<comment type="function">
    <text evidence="1">Catalyzes the decarboxylation of 3-keto-L-gulonate-6-P into L-xylulose-5-P. Is involved in the anaerobic L-ascorbate utilization.</text>
</comment>
<comment type="catalytic activity">
    <reaction evidence="1">
        <text>3-dehydro-L-gulonate 6-phosphate + H(+) = L-xylulose 5-phosphate + CO2</text>
        <dbReference type="Rhea" id="RHEA:14353"/>
        <dbReference type="ChEBI" id="CHEBI:15378"/>
        <dbReference type="ChEBI" id="CHEBI:16526"/>
        <dbReference type="ChEBI" id="CHEBI:57829"/>
        <dbReference type="ChEBI" id="CHEBI:58774"/>
        <dbReference type="EC" id="4.1.1.85"/>
    </reaction>
</comment>
<comment type="cofactor">
    <cofactor evidence="1">
        <name>Mg(2+)</name>
        <dbReference type="ChEBI" id="CHEBI:18420"/>
    </cofactor>
    <text evidence="1">Binds 1 Mg(2+) ion per subunit.</text>
</comment>
<comment type="pathway">
    <text evidence="1">Cofactor degradation; L-ascorbate degradation; D-xylulose 5-phosphate from L-ascorbate: step 2/4.</text>
</comment>
<comment type="subunit">
    <text evidence="1">Homodimer.</text>
</comment>
<comment type="induction">
    <text evidence="1">Induced by L-ascorbate. Repressed by UlaR.</text>
</comment>
<comment type="similarity">
    <text evidence="1">Belongs to the HPS/KGPDC family. KGPDC subfamily.</text>
</comment>
<gene>
    <name evidence="1" type="primary">ulaD</name>
    <name type="ordered locus">ECIAI1_4429</name>
</gene>
<organism>
    <name type="scientific">Escherichia coli O8 (strain IAI1)</name>
    <dbReference type="NCBI Taxonomy" id="585034"/>
    <lineage>
        <taxon>Bacteria</taxon>
        <taxon>Pseudomonadati</taxon>
        <taxon>Pseudomonadota</taxon>
        <taxon>Gammaproteobacteria</taxon>
        <taxon>Enterobacterales</taxon>
        <taxon>Enterobacteriaceae</taxon>
        <taxon>Escherichia</taxon>
    </lineage>
</organism>
<reference key="1">
    <citation type="journal article" date="2009" name="PLoS Genet.">
        <title>Organised genome dynamics in the Escherichia coli species results in highly diverse adaptive paths.</title>
        <authorList>
            <person name="Touchon M."/>
            <person name="Hoede C."/>
            <person name="Tenaillon O."/>
            <person name="Barbe V."/>
            <person name="Baeriswyl S."/>
            <person name="Bidet P."/>
            <person name="Bingen E."/>
            <person name="Bonacorsi S."/>
            <person name="Bouchier C."/>
            <person name="Bouvet O."/>
            <person name="Calteau A."/>
            <person name="Chiapello H."/>
            <person name="Clermont O."/>
            <person name="Cruveiller S."/>
            <person name="Danchin A."/>
            <person name="Diard M."/>
            <person name="Dossat C."/>
            <person name="Karoui M.E."/>
            <person name="Frapy E."/>
            <person name="Garry L."/>
            <person name="Ghigo J.M."/>
            <person name="Gilles A.M."/>
            <person name="Johnson J."/>
            <person name="Le Bouguenec C."/>
            <person name="Lescat M."/>
            <person name="Mangenot S."/>
            <person name="Martinez-Jehanne V."/>
            <person name="Matic I."/>
            <person name="Nassif X."/>
            <person name="Oztas S."/>
            <person name="Petit M.A."/>
            <person name="Pichon C."/>
            <person name="Rouy Z."/>
            <person name="Ruf C.S."/>
            <person name="Schneider D."/>
            <person name="Tourret J."/>
            <person name="Vacherie B."/>
            <person name="Vallenet D."/>
            <person name="Medigue C."/>
            <person name="Rocha E.P.C."/>
            <person name="Denamur E."/>
        </authorList>
    </citation>
    <scope>NUCLEOTIDE SEQUENCE [LARGE SCALE GENOMIC DNA]</scope>
    <source>
        <strain>IAI1</strain>
    </source>
</reference>
<keyword id="KW-0119">Carbohydrate metabolism</keyword>
<keyword id="KW-0210">Decarboxylase</keyword>
<keyword id="KW-0456">Lyase</keyword>
<keyword id="KW-0460">Magnesium</keyword>
<keyword id="KW-0479">Metal-binding</keyword>
<sequence>MSLPMLQVALDNQTMDSAYETTRLIAEEVDIIEVGTILCVGEGVRAVRDLKALYPHKIVLADAKIADAGKILSRMCFEANADWVTVICCADINTAKGALDVAKEFNGDVQIELTGYWTWEQAQQWRDAGIGQVVYHRSRDAQAAGVAWGEADITAIKRLSDMGFKVTVTGGLALEDLPLFKGIPIHVFIAGRSIRDAASPVEAARQFKRSIAELWG</sequence>
<name>ULAD_ECO8A</name>
<dbReference type="EC" id="4.1.1.85" evidence="1"/>
<dbReference type="EMBL" id="CU928160">
    <property type="protein sequence ID" value="CAR01171.1"/>
    <property type="molecule type" value="Genomic_DNA"/>
</dbReference>
<dbReference type="RefSeq" id="WP_000056749.1">
    <property type="nucleotide sequence ID" value="NC_011741.1"/>
</dbReference>
<dbReference type="SMR" id="B7M8V6"/>
<dbReference type="KEGG" id="ecr:ECIAI1_4429"/>
<dbReference type="HOGENOM" id="CLU_081825_0_0_6"/>
<dbReference type="UniPathway" id="UPA00263">
    <property type="reaction ID" value="UER00378"/>
</dbReference>
<dbReference type="GO" id="GO:0033982">
    <property type="term" value="F:3-dehydro-L-gulonate-6-phosphate decarboxylase activity"/>
    <property type="evidence" value="ECO:0007669"/>
    <property type="project" value="UniProtKB-EC"/>
</dbReference>
<dbReference type="GO" id="GO:0000287">
    <property type="term" value="F:magnesium ion binding"/>
    <property type="evidence" value="ECO:0007669"/>
    <property type="project" value="UniProtKB-UniRule"/>
</dbReference>
<dbReference type="GO" id="GO:0004590">
    <property type="term" value="F:orotidine-5'-phosphate decarboxylase activity"/>
    <property type="evidence" value="ECO:0007669"/>
    <property type="project" value="InterPro"/>
</dbReference>
<dbReference type="GO" id="GO:0006207">
    <property type="term" value="P:'de novo' pyrimidine nucleobase biosynthetic process"/>
    <property type="evidence" value="ECO:0007669"/>
    <property type="project" value="InterPro"/>
</dbReference>
<dbReference type="GO" id="GO:0019854">
    <property type="term" value="P:L-ascorbic acid catabolic process"/>
    <property type="evidence" value="ECO:0007669"/>
    <property type="project" value="UniProtKB-UniRule"/>
</dbReference>
<dbReference type="CDD" id="cd04726">
    <property type="entry name" value="KGPDC_HPS"/>
    <property type="match status" value="1"/>
</dbReference>
<dbReference type="FunFam" id="3.20.20.70:FF:000022">
    <property type="entry name" value="3-keto-L-gulonate-6-phosphate decarboxylase UlaD"/>
    <property type="match status" value="1"/>
</dbReference>
<dbReference type="Gene3D" id="3.20.20.70">
    <property type="entry name" value="Aldolase class I"/>
    <property type="match status" value="1"/>
</dbReference>
<dbReference type="HAMAP" id="MF_01267">
    <property type="entry name" value="UlaD"/>
    <property type="match status" value="1"/>
</dbReference>
<dbReference type="InterPro" id="IPR023942">
    <property type="entry name" value="3-keto-L-gulonate6Pdecase_UlaD"/>
</dbReference>
<dbReference type="InterPro" id="IPR013785">
    <property type="entry name" value="Aldolase_TIM"/>
</dbReference>
<dbReference type="InterPro" id="IPR041710">
    <property type="entry name" value="HPS/KGPDC"/>
</dbReference>
<dbReference type="InterPro" id="IPR001754">
    <property type="entry name" value="OMPdeCOase_dom"/>
</dbReference>
<dbReference type="InterPro" id="IPR011060">
    <property type="entry name" value="RibuloseP-bd_barrel"/>
</dbReference>
<dbReference type="NCBIfam" id="NF009832">
    <property type="entry name" value="PRK13306.1"/>
    <property type="match status" value="1"/>
</dbReference>
<dbReference type="PANTHER" id="PTHR35039">
    <property type="entry name" value="3-KETO-L-GULONATE-6-PHOSPHATE DECARBOXYLASE SGBH-RELATED"/>
    <property type="match status" value="1"/>
</dbReference>
<dbReference type="PANTHER" id="PTHR35039:SF3">
    <property type="entry name" value="3-KETO-L-GULONATE-6-PHOSPHATE DECARBOXYLASE SGBH-RELATED"/>
    <property type="match status" value="1"/>
</dbReference>
<dbReference type="Pfam" id="PF00215">
    <property type="entry name" value="OMPdecase"/>
    <property type="match status" value="1"/>
</dbReference>
<dbReference type="SMART" id="SM00934">
    <property type="entry name" value="OMPdecase"/>
    <property type="match status" value="1"/>
</dbReference>
<dbReference type="SUPFAM" id="SSF51366">
    <property type="entry name" value="Ribulose-phoshate binding barrel"/>
    <property type="match status" value="1"/>
</dbReference>
<evidence type="ECO:0000255" key="1">
    <source>
        <dbReference type="HAMAP-Rule" id="MF_01267"/>
    </source>
</evidence>
<protein>
    <recommendedName>
        <fullName evidence="1">3-keto-L-gulonate-6-phosphate decarboxylase UlaD</fullName>
        <ecNumber evidence="1">4.1.1.85</ecNumber>
    </recommendedName>
    <alternativeName>
        <fullName evidence="1">3-dehydro-L-gulonate-6-phosphate decarboxylase</fullName>
    </alternativeName>
    <alternativeName>
        <fullName evidence="1">KGPDC</fullName>
    </alternativeName>
    <alternativeName>
        <fullName evidence="1">L-ascorbate utilization protein D</fullName>
    </alternativeName>
</protein>
<proteinExistence type="inferred from homology"/>